<proteinExistence type="inferred from homology"/>
<protein>
    <recommendedName>
        <fullName evidence="1">Large ribosomal subunit protein bL21</fullName>
    </recommendedName>
    <alternativeName>
        <fullName evidence="2">50S ribosomal protein L21</fullName>
    </alternativeName>
</protein>
<accession>C4ZSS5</accession>
<dbReference type="EMBL" id="CP001396">
    <property type="protein sequence ID" value="ACR61858.1"/>
    <property type="molecule type" value="Genomic_DNA"/>
</dbReference>
<dbReference type="RefSeq" id="WP_000271401.1">
    <property type="nucleotide sequence ID" value="NC_012759.1"/>
</dbReference>
<dbReference type="SMR" id="C4ZSS5"/>
<dbReference type="GeneID" id="93778795"/>
<dbReference type="KEGG" id="ebw:BWG_2888"/>
<dbReference type="HOGENOM" id="CLU_061463_3_3_6"/>
<dbReference type="GO" id="GO:0005737">
    <property type="term" value="C:cytoplasm"/>
    <property type="evidence" value="ECO:0007669"/>
    <property type="project" value="UniProtKB-ARBA"/>
</dbReference>
<dbReference type="GO" id="GO:1990904">
    <property type="term" value="C:ribonucleoprotein complex"/>
    <property type="evidence" value="ECO:0007669"/>
    <property type="project" value="UniProtKB-KW"/>
</dbReference>
<dbReference type="GO" id="GO:0005840">
    <property type="term" value="C:ribosome"/>
    <property type="evidence" value="ECO:0007669"/>
    <property type="project" value="UniProtKB-KW"/>
</dbReference>
<dbReference type="GO" id="GO:0019843">
    <property type="term" value="F:rRNA binding"/>
    <property type="evidence" value="ECO:0007669"/>
    <property type="project" value="UniProtKB-UniRule"/>
</dbReference>
<dbReference type="GO" id="GO:0003735">
    <property type="term" value="F:structural constituent of ribosome"/>
    <property type="evidence" value="ECO:0007669"/>
    <property type="project" value="InterPro"/>
</dbReference>
<dbReference type="GO" id="GO:0006412">
    <property type="term" value="P:translation"/>
    <property type="evidence" value="ECO:0007669"/>
    <property type="project" value="UniProtKB-UniRule"/>
</dbReference>
<dbReference type="HAMAP" id="MF_01363">
    <property type="entry name" value="Ribosomal_bL21"/>
    <property type="match status" value="1"/>
</dbReference>
<dbReference type="InterPro" id="IPR028909">
    <property type="entry name" value="bL21-like"/>
</dbReference>
<dbReference type="InterPro" id="IPR036164">
    <property type="entry name" value="bL21-like_sf"/>
</dbReference>
<dbReference type="InterPro" id="IPR001787">
    <property type="entry name" value="Ribosomal_bL21"/>
</dbReference>
<dbReference type="InterPro" id="IPR018258">
    <property type="entry name" value="Ribosomal_bL21_CS"/>
</dbReference>
<dbReference type="NCBIfam" id="TIGR00061">
    <property type="entry name" value="L21"/>
    <property type="match status" value="1"/>
</dbReference>
<dbReference type="PANTHER" id="PTHR21349">
    <property type="entry name" value="50S RIBOSOMAL PROTEIN L21"/>
    <property type="match status" value="1"/>
</dbReference>
<dbReference type="PANTHER" id="PTHR21349:SF0">
    <property type="entry name" value="LARGE RIBOSOMAL SUBUNIT PROTEIN BL21M"/>
    <property type="match status" value="1"/>
</dbReference>
<dbReference type="Pfam" id="PF00829">
    <property type="entry name" value="Ribosomal_L21p"/>
    <property type="match status" value="1"/>
</dbReference>
<dbReference type="SUPFAM" id="SSF141091">
    <property type="entry name" value="L21p-like"/>
    <property type="match status" value="1"/>
</dbReference>
<dbReference type="PROSITE" id="PS01169">
    <property type="entry name" value="RIBOSOMAL_L21"/>
    <property type="match status" value="1"/>
</dbReference>
<keyword id="KW-0687">Ribonucleoprotein</keyword>
<keyword id="KW-0689">Ribosomal protein</keyword>
<keyword id="KW-0694">RNA-binding</keyword>
<keyword id="KW-0699">rRNA-binding</keyword>
<comment type="function">
    <text evidence="1">This protein binds to 23S rRNA in the presence of protein L20.</text>
</comment>
<comment type="subunit">
    <text evidence="1">Part of the 50S ribosomal subunit. Contacts protein L20.</text>
</comment>
<comment type="similarity">
    <text evidence="1">Belongs to the bacterial ribosomal protein bL21 family.</text>
</comment>
<sequence>MYAVFQSGGKQHRVSEGQTVRLEKLDIATGETVEFAEVLMIANGEEVKIGVPFVDGGVIKAEVVAHGRGEKVKIVKFRRRKHYRKQQGHRQWFTDVKITGISA</sequence>
<feature type="chain" id="PRO_1000214888" description="Large ribosomal subunit protein bL21">
    <location>
        <begin position="1"/>
        <end position="103"/>
    </location>
</feature>
<gene>
    <name evidence="1" type="primary">rplU</name>
    <name type="ordered locus">BWG_2888</name>
</gene>
<evidence type="ECO:0000255" key="1">
    <source>
        <dbReference type="HAMAP-Rule" id="MF_01363"/>
    </source>
</evidence>
<evidence type="ECO:0000305" key="2"/>
<reference key="1">
    <citation type="journal article" date="2009" name="J. Bacteriol.">
        <title>Genomic sequencing reveals regulatory mutations and recombinational events in the widely used MC4100 lineage of Escherichia coli K-12.</title>
        <authorList>
            <person name="Ferenci T."/>
            <person name="Zhou Z."/>
            <person name="Betteridge T."/>
            <person name="Ren Y."/>
            <person name="Liu Y."/>
            <person name="Feng L."/>
            <person name="Reeves P.R."/>
            <person name="Wang L."/>
        </authorList>
    </citation>
    <scope>NUCLEOTIDE SEQUENCE [LARGE SCALE GENOMIC DNA]</scope>
    <source>
        <strain>K12 / MC4100 / BW2952</strain>
    </source>
</reference>
<name>RL21_ECOBW</name>
<organism>
    <name type="scientific">Escherichia coli (strain K12 / MC4100 / BW2952)</name>
    <dbReference type="NCBI Taxonomy" id="595496"/>
    <lineage>
        <taxon>Bacteria</taxon>
        <taxon>Pseudomonadati</taxon>
        <taxon>Pseudomonadota</taxon>
        <taxon>Gammaproteobacteria</taxon>
        <taxon>Enterobacterales</taxon>
        <taxon>Enterobacteriaceae</taxon>
        <taxon>Escherichia</taxon>
    </lineage>
</organism>